<proteinExistence type="inferred from homology"/>
<evidence type="ECO:0000255" key="1">
    <source>
        <dbReference type="HAMAP-Rule" id="MF_00003"/>
    </source>
</evidence>
<dbReference type="EMBL" id="BX640446">
    <property type="protein sequence ID" value="CAE33737.1"/>
    <property type="molecule type" value="Genomic_DNA"/>
</dbReference>
<dbReference type="RefSeq" id="WP_003810550.1">
    <property type="nucleotide sequence ID" value="NC_002927.3"/>
</dbReference>
<dbReference type="SMR" id="Q7WHG3"/>
<dbReference type="GeneID" id="56479355"/>
<dbReference type="KEGG" id="bbr:BB3245"/>
<dbReference type="eggNOG" id="COG0858">
    <property type="taxonomic scope" value="Bacteria"/>
</dbReference>
<dbReference type="HOGENOM" id="CLU_089475_5_1_4"/>
<dbReference type="Proteomes" id="UP000001027">
    <property type="component" value="Chromosome"/>
</dbReference>
<dbReference type="GO" id="GO:0005829">
    <property type="term" value="C:cytosol"/>
    <property type="evidence" value="ECO:0007669"/>
    <property type="project" value="TreeGrafter"/>
</dbReference>
<dbReference type="GO" id="GO:0043024">
    <property type="term" value="F:ribosomal small subunit binding"/>
    <property type="evidence" value="ECO:0007669"/>
    <property type="project" value="TreeGrafter"/>
</dbReference>
<dbReference type="GO" id="GO:0030490">
    <property type="term" value="P:maturation of SSU-rRNA"/>
    <property type="evidence" value="ECO:0007669"/>
    <property type="project" value="UniProtKB-UniRule"/>
</dbReference>
<dbReference type="Gene3D" id="3.30.300.20">
    <property type="match status" value="1"/>
</dbReference>
<dbReference type="HAMAP" id="MF_00003">
    <property type="entry name" value="RbfA"/>
    <property type="match status" value="1"/>
</dbReference>
<dbReference type="InterPro" id="IPR015946">
    <property type="entry name" value="KH_dom-like_a/b"/>
</dbReference>
<dbReference type="InterPro" id="IPR000238">
    <property type="entry name" value="RbfA"/>
</dbReference>
<dbReference type="InterPro" id="IPR023799">
    <property type="entry name" value="RbfA_dom_sf"/>
</dbReference>
<dbReference type="NCBIfam" id="TIGR00082">
    <property type="entry name" value="rbfA"/>
    <property type="match status" value="1"/>
</dbReference>
<dbReference type="PANTHER" id="PTHR33515">
    <property type="entry name" value="RIBOSOME-BINDING FACTOR A, CHLOROPLASTIC-RELATED"/>
    <property type="match status" value="1"/>
</dbReference>
<dbReference type="PANTHER" id="PTHR33515:SF1">
    <property type="entry name" value="RIBOSOME-BINDING FACTOR A, CHLOROPLASTIC-RELATED"/>
    <property type="match status" value="1"/>
</dbReference>
<dbReference type="Pfam" id="PF02033">
    <property type="entry name" value="RBFA"/>
    <property type="match status" value="1"/>
</dbReference>
<dbReference type="SUPFAM" id="SSF89919">
    <property type="entry name" value="Ribosome-binding factor A, RbfA"/>
    <property type="match status" value="1"/>
</dbReference>
<accession>Q7WHG3</accession>
<comment type="function">
    <text evidence="1">One of several proteins that assist in the late maturation steps of the functional core of the 30S ribosomal subunit. Associates with free 30S ribosomal subunits (but not with 30S subunits that are part of 70S ribosomes or polysomes). Required for efficient processing of 16S rRNA. May interact with the 5'-terminal helix region of 16S rRNA.</text>
</comment>
<comment type="subunit">
    <text evidence="1">Monomer. Binds 30S ribosomal subunits, but not 50S ribosomal subunits or 70S ribosomes.</text>
</comment>
<comment type="subcellular location">
    <subcellularLocation>
        <location evidence="1">Cytoplasm</location>
    </subcellularLocation>
</comment>
<comment type="similarity">
    <text evidence="1">Belongs to the RbfA family.</text>
</comment>
<keyword id="KW-0963">Cytoplasm</keyword>
<keyword id="KW-0690">Ribosome biogenesis</keyword>
<name>RBFA_BORBR</name>
<protein>
    <recommendedName>
        <fullName evidence="1">Ribosome-binding factor A</fullName>
    </recommendedName>
</protein>
<sequence length="133" mass="14757">MSRHKSKSIPGRNLRLADQIQKDLAGIIQREIDMTRAGLITLSGVELSADYAHAKVYFTVLGAEPDTAAALLNEKAGWLHSQLYKLLHIHTVPTLRFVHDPQITRGIEMSMLIDRANRPGPHSGVPDEPEDQS</sequence>
<gene>
    <name evidence="1" type="primary">rbfA</name>
    <name type="ordered locus">BB3245</name>
</gene>
<feature type="chain" id="PRO_0000102626" description="Ribosome-binding factor A">
    <location>
        <begin position="1"/>
        <end position="133"/>
    </location>
</feature>
<reference key="1">
    <citation type="journal article" date="2003" name="Nat. Genet.">
        <title>Comparative analysis of the genome sequences of Bordetella pertussis, Bordetella parapertussis and Bordetella bronchiseptica.</title>
        <authorList>
            <person name="Parkhill J."/>
            <person name="Sebaihia M."/>
            <person name="Preston A."/>
            <person name="Murphy L.D."/>
            <person name="Thomson N.R."/>
            <person name="Harris D.E."/>
            <person name="Holden M.T.G."/>
            <person name="Churcher C.M."/>
            <person name="Bentley S.D."/>
            <person name="Mungall K.L."/>
            <person name="Cerdeno-Tarraga A.-M."/>
            <person name="Temple L."/>
            <person name="James K.D."/>
            <person name="Harris B."/>
            <person name="Quail M.A."/>
            <person name="Achtman M."/>
            <person name="Atkin R."/>
            <person name="Baker S."/>
            <person name="Basham D."/>
            <person name="Bason N."/>
            <person name="Cherevach I."/>
            <person name="Chillingworth T."/>
            <person name="Collins M."/>
            <person name="Cronin A."/>
            <person name="Davis P."/>
            <person name="Doggett J."/>
            <person name="Feltwell T."/>
            <person name="Goble A."/>
            <person name="Hamlin N."/>
            <person name="Hauser H."/>
            <person name="Holroyd S."/>
            <person name="Jagels K."/>
            <person name="Leather S."/>
            <person name="Moule S."/>
            <person name="Norberczak H."/>
            <person name="O'Neil S."/>
            <person name="Ormond D."/>
            <person name="Price C."/>
            <person name="Rabbinowitsch E."/>
            <person name="Rutter S."/>
            <person name="Sanders M."/>
            <person name="Saunders D."/>
            <person name="Seeger K."/>
            <person name="Sharp S."/>
            <person name="Simmonds M."/>
            <person name="Skelton J."/>
            <person name="Squares R."/>
            <person name="Squares S."/>
            <person name="Stevens K."/>
            <person name="Unwin L."/>
            <person name="Whitehead S."/>
            <person name="Barrell B.G."/>
            <person name="Maskell D.J."/>
        </authorList>
    </citation>
    <scope>NUCLEOTIDE SEQUENCE [LARGE SCALE GENOMIC DNA]</scope>
    <source>
        <strain>ATCC BAA-588 / NCTC 13252 / RB50</strain>
    </source>
</reference>
<organism>
    <name type="scientific">Bordetella bronchiseptica (strain ATCC BAA-588 / NCTC 13252 / RB50)</name>
    <name type="common">Alcaligenes bronchisepticus</name>
    <dbReference type="NCBI Taxonomy" id="257310"/>
    <lineage>
        <taxon>Bacteria</taxon>
        <taxon>Pseudomonadati</taxon>
        <taxon>Pseudomonadota</taxon>
        <taxon>Betaproteobacteria</taxon>
        <taxon>Burkholderiales</taxon>
        <taxon>Alcaligenaceae</taxon>
        <taxon>Bordetella</taxon>
    </lineage>
</organism>